<sequence length="197" mass="20989">MLERIKDSFTESIQTKIDAAEALPESIAKAAEMMVHCLLGGNKILACGNGGSAGDAQHFSAELLNRYEIERPPLPAIALSTDTSTITAIANDYSYDEIFSKQIFALGQPGDILLAISTSGNSGNVIKAMEAALSRDMTIVALTGKDGGAMAGLLSVGDVEIRVPSNVTARIQEVHLLVIHCLCDNIDRTLFPQDEQQ</sequence>
<accession>A9L683</accession>
<dbReference type="EC" id="5.3.1.28" evidence="1"/>
<dbReference type="EMBL" id="CP000891">
    <property type="protein sequence ID" value="ABX51348.1"/>
    <property type="molecule type" value="Genomic_DNA"/>
</dbReference>
<dbReference type="RefSeq" id="WP_006083530.1">
    <property type="nucleotide sequence ID" value="NC_009997.1"/>
</dbReference>
<dbReference type="SMR" id="A9L683"/>
<dbReference type="KEGG" id="sbn:Sbal195_4189"/>
<dbReference type="HOGENOM" id="CLU_080999_4_0_6"/>
<dbReference type="UniPathway" id="UPA00041">
    <property type="reaction ID" value="UER00436"/>
</dbReference>
<dbReference type="Proteomes" id="UP000000770">
    <property type="component" value="Chromosome"/>
</dbReference>
<dbReference type="GO" id="GO:0005737">
    <property type="term" value="C:cytoplasm"/>
    <property type="evidence" value="ECO:0007669"/>
    <property type="project" value="UniProtKB-SubCell"/>
</dbReference>
<dbReference type="GO" id="GO:0097367">
    <property type="term" value="F:carbohydrate derivative binding"/>
    <property type="evidence" value="ECO:0007669"/>
    <property type="project" value="InterPro"/>
</dbReference>
<dbReference type="GO" id="GO:0008968">
    <property type="term" value="F:D-sedoheptulose 7-phosphate isomerase activity"/>
    <property type="evidence" value="ECO:0007669"/>
    <property type="project" value="UniProtKB-UniRule"/>
</dbReference>
<dbReference type="GO" id="GO:0008270">
    <property type="term" value="F:zinc ion binding"/>
    <property type="evidence" value="ECO:0007669"/>
    <property type="project" value="UniProtKB-UniRule"/>
</dbReference>
<dbReference type="GO" id="GO:0005975">
    <property type="term" value="P:carbohydrate metabolic process"/>
    <property type="evidence" value="ECO:0007669"/>
    <property type="project" value="UniProtKB-UniRule"/>
</dbReference>
<dbReference type="GO" id="GO:2001061">
    <property type="term" value="P:D-glycero-D-manno-heptose 7-phosphate biosynthetic process"/>
    <property type="evidence" value="ECO:0007669"/>
    <property type="project" value="UniProtKB-UniPathway"/>
</dbReference>
<dbReference type="CDD" id="cd05006">
    <property type="entry name" value="SIS_GmhA"/>
    <property type="match status" value="1"/>
</dbReference>
<dbReference type="Gene3D" id="3.40.50.10490">
    <property type="entry name" value="Glucose-6-phosphate isomerase like protein, domain 1"/>
    <property type="match status" value="1"/>
</dbReference>
<dbReference type="HAMAP" id="MF_00067">
    <property type="entry name" value="GmhA"/>
    <property type="match status" value="1"/>
</dbReference>
<dbReference type="InterPro" id="IPR035461">
    <property type="entry name" value="GmhA/DiaA"/>
</dbReference>
<dbReference type="InterPro" id="IPR004515">
    <property type="entry name" value="Phosphoheptose_Isoase"/>
</dbReference>
<dbReference type="InterPro" id="IPR001347">
    <property type="entry name" value="SIS_dom"/>
</dbReference>
<dbReference type="InterPro" id="IPR046348">
    <property type="entry name" value="SIS_dom_sf"/>
</dbReference>
<dbReference type="InterPro" id="IPR050099">
    <property type="entry name" value="SIS_GmhA/DiaA_subfam"/>
</dbReference>
<dbReference type="NCBIfam" id="NF010546">
    <property type="entry name" value="PRK13936.1"/>
    <property type="match status" value="1"/>
</dbReference>
<dbReference type="PANTHER" id="PTHR30390:SF6">
    <property type="entry name" value="DNAA INITIATOR-ASSOCIATING PROTEIN DIAA"/>
    <property type="match status" value="1"/>
</dbReference>
<dbReference type="PANTHER" id="PTHR30390">
    <property type="entry name" value="SEDOHEPTULOSE 7-PHOSPHATE ISOMERASE / DNAA INITIATOR-ASSOCIATING FACTOR FOR REPLICATION INITIATION"/>
    <property type="match status" value="1"/>
</dbReference>
<dbReference type="Pfam" id="PF13580">
    <property type="entry name" value="SIS_2"/>
    <property type="match status" value="1"/>
</dbReference>
<dbReference type="SUPFAM" id="SSF53697">
    <property type="entry name" value="SIS domain"/>
    <property type="match status" value="1"/>
</dbReference>
<dbReference type="PROSITE" id="PS51464">
    <property type="entry name" value="SIS"/>
    <property type="match status" value="1"/>
</dbReference>
<organism>
    <name type="scientific">Shewanella baltica (strain OS195)</name>
    <dbReference type="NCBI Taxonomy" id="399599"/>
    <lineage>
        <taxon>Bacteria</taxon>
        <taxon>Pseudomonadati</taxon>
        <taxon>Pseudomonadota</taxon>
        <taxon>Gammaproteobacteria</taxon>
        <taxon>Alteromonadales</taxon>
        <taxon>Shewanellaceae</taxon>
        <taxon>Shewanella</taxon>
    </lineage>
</organism>
<name>GMHA_SHEB9</name>
<comment type="function">
    <text evidence="1">Catalyzes the isomerization of sedoheptulose 7-phosphate in D-glycero-D-manno-heptose 7-phosphate.</text>
</comment>
<comment type="catalytic activity">
    <reaction evidence="1">
        <text>2 D-sedoheptulose 7-phosphate = D-glycero-alpha-D-manno-heptose 7-phosphate + D-glycero-beta-D-manno-heptose 7-phosphate</text>
        <dbReference type="Rhea" id="RHEA:27489"/>
        <dbReference type="ChEBI" id="CHEBI:57483"/>
        <dbReference type="ChEBI" id="CHEBI:60203"/>
        <dbReference type="ChEBI" id="CHEBI:60204"/>
        <dbReference type="EC" id="5.3.1.28"/>
    </reaction>
</comment>
<comment type="cofactor">
    <cofactor evidence="1">
        <name>Zn(2+)</name>
        <dbReference type="ChEBI" id="CHEBI:29105"/>
    </cofactor>
    <text evidence="1">Binds 1 zinc ion per subunit.</text>
</comment>
<comment type="pathway">
    <text evidence="1">Carbohydrate biosynthesis; D-glycero-D-manno-heptose 7-phosphate biosynthesis; D-glycero-alpha-D-manno-heptose 7-phosphate and D-glycero-beta-D-manno-heptose 7-phosphate from sedoheptulose 7-phosphate: step 1/1.</text>
</comment>
<comment type="subunit">
    <text evidence="1">Homotetramer.</text>
</comment>
<comment type="subcellular location">
    <subcellularLocation>
        <location evidence="1">Cytoplasm</location>
    </subcellularLocation>
</comment>
<comment type="miscellaneous">
    <text evidence="1">The reaction produces a racemic mixture of D-glycero-alpha-D-manno-heptose 7-phosphate and D-glycero-beta-D-manno-heptose 7-phosphate.</text>
</comment>
<comment type="similarity">
    <text evidence="1">Belongs to the SIS family. GmhA subfamily.</text>
</comment>
<protein>
    <recommendedName>
        <fullName evidence="1">Phosphoheptose isomerase</fullName>
        <ecNumber evidence="1">5.3.1.28</ecNumber>
    </recommendedName>
    <alternativeName>
        <fullName evidence="1">Sedoheptulose 7-phosphate isomerase</fullName>
    </alternativeName>
</protein>
<evidence type="ECO:0000255" key="1">
    <source>
        <dbReference type="HAMAP-Rule" id="MF_00067"/>
    </source>
</evidence>
<reference key="1">
    <citation type="submission" date="2007-11" db="EMBL/GenBank/DDBJ databases">
        <title>Complete sequence of chromosome of Shewanella baltica OS195.</title>
        <authorList>
            <consortium name="US DOE Joint Genome Institute"/>
            <person name="Copeland A."/>
            <person name="Lucas S."/>
            <person name="Lapidus A."/>
            <person name="Barry K."/>
            <person name="Glavina del Rio T."/>
            <person name="Dalin E."/>
            <person name="Tice H."/>
            <person name="Pitluck S."/>
            <person name="Chain P."/>
            <person name="Malfatti S."/>
            <person name="Shin M."/>
            <person name="Vergez L."/>
            <person name="Schmutz J."/>
            <person name="Larimer F."/>
            <person name="Land M."/>
            <person name="Hauser L."/>
            <person name="Kyrpides N."/>
            <person name="Kim E."/>
            <person name="Brettar I."/>
            <person name="Rodrigues J."/>
            <person name="Konstantinidis K."/>
            <person name="Klappenbach J."/>
            <person name="Hofle M."/>
            <person name="Tiedje J."/>
            <person name="Richardson P."/>
        </authorList>
    </citation>
    <scope>NUCLEOTIDE SEQUENCE [LARGE SCALE GENOMIC DNA]</scope>
    <source>
        <strain>OS195</strain>
    </source>
</reference>
<keyword id="KW-0119">Carbohydrate metabolism</keyword>
<keyword id="KW-0963">Cytoplasm</keyword>
<keyword id="KW-0413">Isomerase</keyword>
<keyword id="KW-0479">Metal-binding</keyword>
<keyword id="KW-0862">Zinc</keyword>
<gene>
    <name evidence="1" type="primary">gmhA</name>
    <name type="ordered locus">Sbal195_4189</name>
</gene>
<proteinExistence type="inferred from homology"/>
<feature type="chain" id="PRO_1000197015" description="Phosphoheptose isomerase">
    <location>
        <begin position="1"/>
        <end position="197"/>
    </location>
</feature>
<feature type="domain" description="SIS" evidence="1">
    <location>
        <begin position="34"/>
        <end position="196"/>
    </location>
</feature>
<feature type="binding site" evidence="1">
    <location>
        <begin position="49"/>
        <end position="51"/>
    </location>
    <ligand>
        <name>substrate</name>
    </ligand>
</feature>
<feature type="binding site" evidence="1">
    <location>
        <position position="58"/>
    </location>
    <ligand>
        <name>Zn(2+)</name>
        <dbReference type="ChEBI" id="CHEBI:29105"/>
    </ligand>
</feature>
<feature type="binding site" evidence="1">
    <location>
        <position position="62"/>
    </location>
    <ligand>
        <name>substrate</name>
    </ligand>
</feature>
<feature type="binding site" evidence="1">
    <location>
        <position position="62"/>
    </location>
    <ligand>
        <name>Zn(2+)</name>
        <dbReference type="ChEBI" id="CHEBI:29105"/>
    </ligand>
</feature>
<feature type="binding site" evidence="1">
    <location>
        <begin position="91"/>
        <end position="92"/>
    </location>
    <ligand>
        <name>substrate</name>
    </ligand>
</feature>
<feature type="binding site" evidence="1">
    <location>
        <begin position="117"/>
        <end position="119"/>
    </location>
    <ligand>
        <name>substrate</name>
    </ligand>
</feature>
<feature type="binding site" evidence="1">
    <location>
        <position position="122"/>
    </location>
    <ligand>
        <name>substrate</name>
    </ligand>
</feature>
<feature type="binding site" evidence="1">
    <location>
        <position position="172"/>
    </location>
    <ligand>
        <name>substrate</name>
    </ligand>
</feature>
<feature type="binding site" evidence="1">
    <location>
        <position position="172"/>
    </location>
    <ligand>
        <name>Zn(2+)</name>
        <dbReference type="ChEBI" id="CHEBI:29105"/>
    </ligand>
</feature>
<feature type="binding site" evidence="1">
    <location>
        <position position="180"/>
    </location>
    <ligand>
        <name>Zn(2+)</name>
        <dbReference type="ChEBI" id="CHEBI:29105"/>
    </ligand>
</feature>